<accession>A0KZM3</accession>
<organism>
    <name type="scientific">Shewanella sp. (strain ANA-3)</name>
    <dbReference type="NCBI Taxonomy" id="94122"/>
    <lineage>
        <taxon>Bacteria</taxon>
        <taxon>Pseudomonadati</taxon>
        <taxon>Pseudomonadota</taxon>
        <taxon>Gammaproteobacteria</taxon>
        <taxon>Alteromonadales</taxon>
        <taxon>Shewanellaceae</taxon>
        <taxon>Shewanella</taxon>
    </lineage>
</organism>
<comment type="similarity">
    <text evidence="1">Belongs to the bacterial ribosomal protein bS16 family.</text>
</comment>
<reference key="1">
    <citation type="submission" date="2006-09" db="EMBL/GenBank/DDBJ databases">
        <title>Complete sequence of chromosome 1 of Shewanella sp. ANA-3.</title>
        <authorList>
            <person name="Copeland A."/>
            <person name="Lucas S."/>
            <person name="Lapidus A."/>
            <person name="Barry K."/>
            <person name="Detter J.C."/>
            <person name="Glavina del Rio T."/>
            <person name="Hammon N."/>
            <person name="Israni S."/>
            <person name="Dalin E."/>
            <person name="Tice H."/>
            <person name="Pitluck S."/>
            <person name="Chertkov O."/>
            <person name="Brettin T."/>
            <person name="Bruce D."/>
            <person name="Han C."/>
            <person name="Tapia R."/>
            <person name="Gilna P."/>
            <person name="Schmutz J."/>
            <person name="Larimer F."/>
            <person name="Land M."/>
            <person name="Hauser L."/>
            <person name="Kyrpides N."/>
            <person name="Kim E."/>
            <person name="Newman D."/>
            <person name="Salticov C."/>
            <person name="Konstantinidis K."/>
            <person name="Klappenback J."/>
            <person name="Tiedje J."/>
            <person name="Richardson P."/>
        </authorList>
    </citation>
    <scope>NUCLEOTIDE SEQUENCE [LARGE SCALE GENOMIC DNA]</scope>
    <source>
        <strain>ANA-3</strain>
    </source>
</reference>
<protein>
    <recommendedName>
        <fullName evidence="1">Small ribosomal subunit protein bS16</fullName>
    </recommendedName>
    <alternativeName>
        <fullName evidence="2">30S ribosomal protein S16</fullName>
    </alternativeName>
</protein>
<evidence type="ECO:0000255" key="1">
    <source>
        <dbReference type="HAMAP-Rule" id="MF_00385"/>
    </source>
</evidence>
<evidence type="ECO:0000305" key="2"/>
<gene>
    <name evidence="1" type="primary">rpsP</name>
    <name type="ordered locus">Shewana3_3017</name>
</gene>
<keyword id="KW-0687">Ribonucleoprotein</keyword>
<keyword id="KW-0689">Ribosomal protein</keyword>
<sequence>MVTIRLARGGAKKRPFYNIVVADSRNARDGRFIERVGFFNPLARGQEETLRLDLARVEHWVANGAATTDRVAKLIKDAKAAA</sequence>
<proteinExistence type="inferred from homology"/>
<name>RS16_SHESA</name>
<dbReference type="EMBL" id="CP000469">
    <property type="protein sequence ID" value="ABK49242.1"/>
    <property type="molecule type" value="Genomic_DNA"/>
</dbReference>
<dbReference type="RefSeq" id="WP_011071566.1">
    <property type="nucleotide sequence ID" value="NC_008577.1"/>
</dbReference>
<dbReference type="SMR" id="A0KZM3"/>
<dbReference type="STRING" id="94122.Shewana3_3017"/>
<dbReference type="GeneID" id="94728940"/>
<dbReference type="KEGG" id="shn:Shewana3_3017"/>
<dbReference type="eggNOG" id="COG0228">
    <property type="taxonomic scope" value="Bacteria"/>
</dbReference>
<dbReference type="HOGENOM" id="CLU_100590_5_1_6"/>
<dbReference type="OrthoDB" id="9807878at2"/>
<dbReference type="Proteomes" id="UP000002589">
    <property type="component" value="Chromosome"/>
</dbReference>
<dbReference type="GO" id="GO:0005737">
    <property type="term" value="C:cytoplasm"/>
    <property type="evidence" value="ECO:0007669"/>
    <property type="project" value="UniProtKB-ARBA"/>
</dbReference>
<dbReference type="GO" id="GO:0015935">
    <property type="term" value="C:small ribosomal subunit"/>
    <property type="evidence" value="ECO:0007669"/>
    <property type="project" value="TreeGrafter"/>
</dbReference>
<dbReference type="GO" id="GO:0003735">
    <property type="term" value="F:structural constituent of ribosome"/>
    <property type="evidence" value="ECO:0007669"/>
    <property type="project" value="InterPro"/>
</dbReference>
<dbReference type="GO" id="GO:0006412">
    <property type="term" value="P:translation"/>
    <property type="evidence" value="ECO:0007669"/>
    <property type="project" value="UniProtKB-UniRule"/>
</dbReference>
<dbReference type="FunFam" id="3.30.1320.10:FF:000001">
    <property type="entry name" value="30S ribosomal protein S16"/>
    <property type="match status" value="1"/>
</dbReference>
<dbReference type="Gene3D" id="3.30.1320.10">
    <property type="match status" value="1"/>
</dbReference>
<dbReference type="HAMAP" id="MF_00385">
    <property type="entry name" value="Ribosomal_bS16"/>
    <property type="match status" value="1"/>
</dbReference>
<dbReference type="InterPro" id="IPR000307">
    <property type="entry name" value="Ribosomal_bS16"/>
</dbReference>
<dbReference type="InterPro" id="IPR020592">
    <property type="entry name" value="Ribosomal_bS16_CS"/>
</dbReference>
<dbReference type="InterPro" id="IPR023803">
    <property type="entry name" value="Ribosomal_bS16_dom_sf"/>
</dbReference>
<dbReference type="NCBIfam" id="TIGR00002">
    <property type="entry name" value="S16"/>
    <property type="match status" value="1"/>
</dbReference>
<dbReference type="PANTHER" id="PTHR12919">
    <property type="entry name" value="30S RIBOSOMAL PROTEIN S16"/>
    <property type="match status" value="1"/>
</dbReference>
<dbReference type="PANTHER" id="PTHR12919:SF20">
    <property type="entry name" value="SMALL RIBOSOMAL SUBUNIT PROTEIN BS16M"/>
    <property type="match status" value="1"/>
</dbReference>
<dbReference type="Pfam" id="PF00886">
    <property type="entry name" value="Ribosomal_S16"/>
    <property type="match status" value="1"/>
</dbReference>
<dbReference type="SUPFAM" id="SSF54565">
    <property type="entry name" value="Ribosomal protein S16"/>
    <property type="match status" value="1"/>
</dbReference>
<dbReference type="PROSITE" id="PS00732">
    <property type="entry name" value="RIBOSOMAL_S16"/>
    <property type="match status" value="1"/>
</dbReference>
<feature type="chain" id="PRO_1000049349" description="Small ribosomal subunit protein bS16">
    <location>
        <begin position="1"/>
        <end position="82"/>
    </location>
</feature>